<organism>
    <name type="scientific">Saccharomyces cerevisiae (strain ATCC 204508 / S288c)</name>
    <name type="common">Baker's yeast</name>
    <dbReference type="NCBI Taxonomy" id="559292"/>
    <lineage>
        <taxon>Eukaryota</taxon>
        <taxon>Fungi</taxon>
        <taxon>Dikarya</taxon>
        <taxon>Ascomycota</taxon>
        <taxon>Saccharomycotina</taxon>
        <taxon>Saccharomycetes</taxon>
        <taxon>Saccharomycetales</taxon>
        <taxon>Saccharomycetaceae</taxon>
        <taxon>Saccharomyces</taxon>
    </lineage>
</organism>
<feature type="transit peptide" description="Mitochondrion" evidence="2">
    <location>
        <begin position="1"/>
        <end position="90"/>
    </location>
</feature>
<feature type="chain" id="PRO_0000035664" description="Acetolactate synthase catalytic subunit, mitochondrial">
    <location>
        <begin position="91"/>
        <end position="687"/>
    </location>
</feature>
<feature type="region of interest" description="Disordered" evidence="3">
    <location>
        <begin position="43"/>
        <end position="68"/>
    </location>
</feature>
<feature type="region of interest" description="Thiamine pyrophosphate binding">
    <location>
        <begin position="499"/>
        <end position="579"/>
    </location>
</feature>
<feature type="compositionally biased region" description="Low complexity" evidence="3">
    <location>
        <begin position="43"/>
        <end position="52"/>
    </location>
</feature>
<feature type="binding site">
    <location>
        <position position="139"/>
    </location>
    <ligand>
        <name>thiamine diphosphate</name>
        <dbReference type="ChEBI" id="CHEBI:58937"/>
    </ligand>
</feature>
<feature type="binding site" evidence="5">
    <location>
        <position position="241"/>
    </location>
    <ligand>
        <name>FAD</name>
        <dbReference type="ChEBI" id="CHEBI:57692"/>
    </ligand>
</feature>
<feature type="binding site" evidence="5">
    <location>
        <begin position="355"/>
        <end position="376"/>
    </location>
    <ligand>
        <name>FAD</name>
        <dbReference type="ChEBI" id="CHEBI:57692"/>
    </ligand>
</feature>
<feature type="binding site" evidence="5">
    <location>
        <begin position="407"/>
        <end position="426"/>
    </location>
    <ligand>
        <name>FAD</name>
        <dbReference type="ChEBI" id="CHEBI:57692"/>
    </ligand>
</feature>
<feature type="binding site">
    <location>
        <position position="550"/>
    </location>
    <ligand>
        <name>Mg(2+)</name>
        <dbReference type="ChEBI" id="CHEBI:18420"/>
    </ligand>
</feature>
<feature type="binding site">
    <location>
        <position position="577"/>
    </location>
    <ligand>
        <name>Mg(2+)</name>
        <dbReference type="ChEBI" id="CHEBI:18420"/>
    </ligand>
</feature>
<feature type="binding site">
    <location>
        <position position="579"/>
    </location>
    <ligand>
        <name>Mg(2+)</name>
        <dbReference type="ChEBI" id="CHEBI:18420"/>
    </ligand>
</feature>
<feature type="turn" evidence="13">
    <location>
        <begin position="88"/>
        <end position="91"/>
    </location>
</feature>
<feature type="helix" evidence="13">
    <location>
        <begin position="94"/>
        <end position="104"/>
    </location>
</feature>
<feature type="strand" evidence="13">
    <location>
        <begin position="109"/>
        <end position="112"/>
    </location>
</feature>
<feature type="helix" evidence="13">
    <location>
        <begin position="116"/>
        <end position="118"/>
    </location>
</feature>
<feature type="helix" evidence="13">
    <location>
        <begin position="119"/>
        <end position="127"/>
    </location>
</feature>
<feature type="strand" evidence="13">
    <location>
        <begin position="132"/>
        <end position="134"/>
    </location>
</feature>
<feature type="helix" evidence="13">
    <location>
        <begin position="139"/>
        <end position="153"/>
    </location>
</feature>
<feature type="strand" evidence="13">
    <location>
        <begin position="157"/>
        <end position="161"/>
    </location>
</feature>
<feature type="helix" evidence="13">
    <location>
        <begin position="165"/>
        <end position="168"/>
    </location>
</feature>
<feature type="helix" evidence="13">
    <location>
        <begin position="171"/>
        <end position="180"/>
    </location>
</feature>
<feature type="strand" evidence="13">
    <location>
        <begin position="184"/>
        <end position="190"/>
    </location>
</feature>
<feature type="helix" evidence="13">
    <location>
        <begin position="193"/>
        <end position="195"/>
    </location>
</feature>
<feature type="turn" evidence="12">
    <location>
        <begin position="196"/>
        <end position="199"/>
    </location>
</feature>
<feature type="helix" evidence="13">
    <location>
        <begin position="206"/>
        <end position="209"/>
    </location>
</feature>
<feature type="helix" evidence="13">
    <location>
        <begin position="211"/>
        <end position="213"/>
    </location>
</feature>
<feature type="strand" evidence="13">
    <location>
        <begin position="214"/>
        <end position="219"/>
    </location>
</feature>
<feature type="helix" evidence="13">
    <location>
        <begin position="223"/>
        <end position="225"/>
    </location>
</feature>
<feature type="helix" evidence="13">
    <location>
        <begin position="226"/>
        <end position="237"/>
    </location>
</feature>
<feature type="strand" evidence="13">
    <location>
        <begin position="239"/>
        <end position="241"/>
    </location>
</feature>
<feature type="strand" evidence="13">
    <location>
        <begin position="244"/>
        <end position="250"/>
    </location>
</feature>
<feature type="helix" evidence="13">
    <location>
        <begin position="251"/>
        <end position="255"/>
    </location>
</feature>
<feature type="helix" evidence="13">
    <location>
        <begin position="264"/>
        <end position="267"/>
    </location>
</feature>
<feature type="strand" evidence="13">
    <location>
        <begin position="272"/>
        <end position="275"/>
    </location>
</feature>
<feature type="helix" evidence="13">
    <location>
        <begin position="281"/>
        <end position="298"/>
    </location>
</feature>
<feature type="strand" evidence="13">
    <location>
        <begin position="300"/>
        <end position="306"/>
    </location>
</feature>
<feature type="helix" evidence="13">
    <location>
        <begin position="308"/>
        <end position="312"/>
    </location>
</feature>
<feature type="helix" evidence="13">
    <location>
        <begin position="316"/>
        <end position="327"/>
    </location>
</feature>
<feature type="strand" evidence="13">
    <location>
        <begin position="331"/>
        <end position="333"/>
    </location>
</feature>
<feature type="helix" evidence="13">
    <location>
        <begin position="335"/>
        <end position="337"/>
    </location>
</feature>
<feature type="strand" evidence="13">
    <location>
        <begin position="348"/>
        <end position="351"/>
    </location>
</feature>
<feature type="helix" evidence="13">
    <location>
        <begin position="358"/>
        <end position="366"/>
    </location>
</feature>
<feature type="strand" evidence="13">
    <location>
        <begin position="368"/>
        <end position="374"/>
    </location>
</feature>
<feature type="helix" evidence="13">
    <location>
        <begin position="379"/>
        <end position="382"/>
    </location>
</feature>
<feature type="helix" evidence="13">
    <location>
        <begin position="385"/>
        <end position="387"/>
    </location>
</feature>
<feature type="helix" evidence="13">
    <location>
        <begin position="390"/>
        <end position="397"/>
    </location>
</feature>
<feature type="strand" evidence="13">
    <location>
        <begin position="402"/>
        <end position="408"/>
    </location>
</feature>
<feature type="helix" evidence="13">
    <location>
        <begin position="410"/>
        <end position="412"/>
    </location>
</feature>
<feature type="strand" evidence="13">
    <location>
        <begin position="415"/>
        <end position="417"/>
    </location>
</feature>
<feature type="strand" evidence="13">
    <location>
        <begin position="420"/>
        <end position="425"/>
    </location>
</feature>
<feature type="helix" evidence="13">
    <location>
        <begin position="427"/>
        <end position="435"/>
    </location>
</feature>
<feature type="helix" evidence="13">
    <location>
        <begin position="445"/>
        <end position="457"/>
    </location>
</feature>
<feature type="strand" evidence="10">
    <location>
        <begin position="467"/>
        <end position="469"/>
    </location>
</feature>
<feature type="helix" evidence="13">
    <location>
        <begin position="473"/>
        <end position="486"/>
    </location>
</feature>
<feature type="strand" evidence="13">
    <location>
        <begin position="491"/>
        <end position="495"/>
    </location>
</feature>
<feature type="helix" evidence="13">
    <location>
        <begin position="499"/>
        <end position="507"/>
    </location>
</feature>
<feature type="strand" evidence="12">
    <location>
        <begin position="512"/>
        <end position="514"/>
    </location>
</feature>
<feature type="helix" evidence="13">
    <location>
        <begin position="528"/>
        <end position="538"/>
    </location>
</feature>
<feature type="strand" evidence="13">
    <location>
        <begin position="542"/>
        <end position="549"/>
    </location>
</feature>
<feature type="helix" evidence="13">
    <location>
        <begin position="550"/>
        <end position="556"/>
    </location>
</feature>
<feature type="helix" evidence="13">
    <location>
        <begin position="557"/>
        <end position="559"/>
    </location>
</feature>
<feature type="helix" evidence="13">
    <location>
        <begin position="560"/>
        <end position="566"/>
    </location>
</feature>
<feature type="strand" evidence="13">
    <location>
        <begin position="571"/>
        <end position="576"/>
    </location>
</feature>
<feature type="strand" evidence="13">
    <location>
        <begin position="582"/>
        <end position="587"/>
    </location>
</feature>
<feature type="strand" evidence="12">
    <location>
        <begin position="589"/>
        <end position="591"/>
    </location>
</feature>
<feature type="strand" evidence="12">
    <location>
        <begin position="594"/>
        <end position="596"/>
    </location>
</feature>
<feature type="helix" evidence="13">
    <location>
        <begin position="605"/>
        <end position="612"/>
    </location>
</feature>
<feature type="strand" evidence="13">
    <location>
        <begin position="614"/>
        <end position="619"/>
    </location>
</feature>
<feature type="helix" evidence="13">
    <location>
        <begin position="622"/>
        <end position="624"/>
    </location>
</feature>
<feature type="helix" evidence="13">
    <location>
        <begin position="625"/>
        <end position="634"/>
    </location>
</feature>
<feature type="strand" evidence="13">
    <location>
        <begin position="639"/>
        <end position="645"/>
    </location>
</feature>
<feature type="strand" evidence="11">
    <location>
        <begin position="652"/>
        <end position="654"/>
    </location>
</feature>
<feature type="helix" evidence="11">
    <location>
        <begin position="669"/>
        <end position="682"/>
    </location>
</feature>
<feature type="turn" evidence="11">
    <location>
        <begin position="683"/>
        <end position="685"/>
    </location>
</feature>
<name>ILVB_YEAST</name>
<proteinExistence type="evidence at protein level"/>
<comment type="function">
    <text evidence="9">Catalytic subunit of mitochondrial acetolactate synthase, which catalyzes the first of a series of common steps in the biosynthesis of the branched-chain amino acids. Catalyzes the irreversible decarboxylation of pyruvate to a bound hydroxyethyl group that then condenses with either a second pyruvate molecule to form 2-acetolactate (AL) or with 2-ketobutyrate to form 2-aceto-2-hydroxybutyrate (AHB). The first product is the precursor for valine and leucine biosynthesis, while the second leads to isoleucine.</text>
</comment>
<comment type="catalytic activity">
    <reaction evidence="4">
        <text>2 pyruvate + H(+) = (2S)-2-acetolactate + CO2</text>
        <dbReference type="Rhea" id="RHEA:25249"/>
        <dbReference type="ChEBI" id="CHEBI:15361"/>
        <dbReference type="ChEBI" id="CHEBI:15378"/>
        <dbReference type="ChEBI" id="CHEBI:16526"/>
        <dbReference type="ChEBI" id="CHEBI:58476"/>
        <dbReference type="EC" id="2.2.1.6"/>
    </reaction>
    <physiologicalReaction direction="left-to-right" evidence="4">
        <dbReference type="Rhea" id="RHEA:25250"/>
    </physiologicalReaction>
</comment>
<comment type="catalytic activity">
    <reaction evidence="9">
        <text>2-oxobutanoate + pyruvate + H(+) = (S)-2-ethyl-2-hydroxy-3-oxobutanoate + CO2</text>
        <dbReference type="Rhea" id="RHEA:27654"/>
        <dbReference type="ChEBI" id="CHEBI:15361"/>
        <dbReference type="ChEBI" id="CHEBI:15378"/>
        <dbReference type="ChEBI" id="CHEBI:16526"/>
        <dbReference type="ChEBI" id="CHEBI:16763"/>
        <dbReference type="ChEBI" id="CHEBI:49256"/>
        <dbReference type="EC" id="2.2.1.6"/>
    </reaction>
    <physiologicalReaction direction="left-to-right" evidence="9">
        <dbReference type="Rhea" id="RHEA:27655"/>
    </physiologicalReaction>
</comment>
<comment type="cofactor">
    <cofactor evidence="1">
        <name>Mg(2+)</name>
        <dbReference type="ChEBI" id="CHEBI:18420"/>
    </cofactor>
    <text evidence="1">Binds 1 Mg(2+) ion per subunit.</text>
</comment>
<comment type="cofactor">
    <cofactor evidence="1">
        <name>thiamine diphosphate</name>
        <dbReference type="ChEBI" id="CHEBI:58937"/>
    </cofactor>
    <text evidence="1">Binds 1 thiamine pyrophosphate per subunit.</text>
</comment>
<comment type="activity regulation">
    <text evidence="4">The regulatory subunit ILV6 stimulates enzymatic activity seven- to tenfold and confers sensitivity to inhibition by valine and activation by ATP.</text>
</comment>
<comment type="biophysicochemical properties">
    <kinetics>
        <KM evidence="4">8.6 mM for pyruvate (catalytic subunit only)</KM>
        <KM evidence="4">18.1 mM for pyruvate (reconstituted into the acetolactate synthase complex with the regulatory subunit)</KM>
    </kinetics>
    <phDependence>
        <text evidence="4">Optimum pH is 7-7.5.</text>
    </phDependence>
</comment>
<comment type="pathway">
    <text evidence="9">Amino-acid biosynthesis; L-isoleucine biosynthesis; L-isoleucine from 2-oxobutanoate: step 1/4.</text>
</comment>
<comment type="pathway">
    <text evidence="9">Amino-acid biosynthesis; L-valine biosynthesis; L-valine from pyruvate: step 1/4.</text>
</comment>
<comment type="subunit">
    <text evidence="4">Homodimer. The acetolactate synthase complex contains the catalytic subunit ILV2 and the regulatory small subunit ILV6.</text>
</comment>
<comment type="subcellular location">
    <subcellularLocation>
        <location evidence="9">Mitochondrion</location>
    </subcellularLocation>
</comment>
<comment type="miscellaneous">
    <text>Contains 1 molecule of FAD per monomer. The role of this cofactor is not clear considering that the reaction does not involve redox chemistry.</text>
</comment>
<comment type="miscellaneous">
    <text evidence="6">Present with 31900 molecules/cell in log phase SD medium.</text>
</comment>
<comment type="similarity">
    <text evidence="8">Belongs to the TPP enzyme family.</text>
</comment>
<keyword id="KW-0002">3D-structure</keyword>
<keyword id="KW-0028">Amino-acid biosynthesis</keyword>
<keyword id="KW-0100">Branched-chain amino acid biosynthesis</keyword>
<keyword id="KW-0460">Magnesium</keyword>
<keyword id="KW-0479">Metal-binding</keyword>
<keyword id="KW-0496">Mitochondrion</keyword>
<keyword id="KW-1185">Reference proteome</keyword>
<keyword id="KW-0786">Thiamine pyrophosphate</keyword>
<keyword id="KW-0808">Transferase</keyword>
<keyword id="KW-0809">Transit peptide</keyword>
<accession>P07342</accession>
<accession>D6VZT1</accession>
<evidence type="ECO:0000250" key="1"/>
<evidence type="ECO:0000255" key="2"/>
<evidence type="ECO:0000256" key="3">
    <source>
        <dbReference type="SAM" id="MobiDB-lite"/>
    </source>
</evidence>
<evidence type="ECO:0000269" key="4">
    <source>
    </source>
</evidence>
<evidence type="ECO:0000269" key="5">
    <source>
    </source>
</evidence>
<evidence type="ECO:0000269" key="6">
    <source>
    </source>
</evidence>
<evidence type="ECO:0000303" key="7">
    <source>
    </source>
</evidence>
<evidence type="ECO:0000305" key="8"/>
<evidence type="ECO:0000305" key="9">
    <source>
    </source>
</evidence>
<evidence type="ECO:0007829" key="10">
    <source>
        <dbReference type="PDB" id="1JSC"/>
    </source>
</evidence>
<evidence type="ECO:0007829" key="11">
    <source>
        <dbReference type="PDB" id="5FEM"/>
    </source>
</evidence>
<evidence type="ECO:0007829" key="12">
    <source>
        <dbReference type="PDB" id="5IMS"/>
    </source>
</evidence>
<evidence type="ECO:0007829" key="13">
    <source>
        <dbReference type="PDB" id="6BD9"/>
    </source>
</evidence>
<reference key="1">
    <citation type="journal article" date="1985" name="Nucleic Acids Res.">
        <title>Nucleotide sequence of the yeast ILV2 gene which encodes acetolactate synthase.</title>
        <authorList>
            <person name="Falco S.C."/>
            <person name="Dumas K.S."/>
            <person name="Livak K.J."/>
        </authorList>
    </citation>
    <scope>NUCLEOTIDE SEQUENCE [GENOMIC DNA]</scope>
</reference>
<reference key="2">
    <citation type="journal article" date="1997" name="Nature">
        <title>The nucleotide sequence of Saccharomyces cerevisiae chromosome XIII.</title>
        <authorList>
            <person name="Bowman S."/>
            <person name="Churcher C.M."/>
            <person name="Badcock K."/>
            <person name="Brown D."/>
            <person name="Chillingworth T."/>
            <person name="Connor R."/>
            <person name="Dedman K."/>
            <person name="Devlin K."/>
            <person name="Gentles S."/>
            <person name="Hamlin N."/>
            <person name="Hunt S."/>
            <person name="Jagels K."/>
            <person name="Lye G."/>
            <person name="Moule S."/>
            <person name="Odell C."/>
            <person name="Pearson D."/>
            <person name="Rajandream M.A."/>
            <person name="Rice P."/>
            <person name="Skelton J."/>
            <person name="Walsh S.V."/>
            <person name="Whitehead S."/>
            <person name="Barrell B.G."/>
        </authorList>
    </citation>
    <scope>NUCLEOTIDE SEQUENCE [LARGE SCALE GENOMIC DNA]</scope>
    <source>
        <strain>ATCC 204508 / S288c</strain>
    </source>
</reference>
<reference key="3">
    <citation type="journal article" date="2014" name="G3 (Bethesda)">
        <title>The reference genome sequence of Saccharomyces cerevisiae: Then and now.</title>
        <authorList>
            <person name="Engel S.R."/>
            <person name="Dietrich F.S."/>
            <person name="Fisk D.G."/>
            <person name="Binkley G."/>
            <person name="Balakrishnan R."/>
            <person name="Costanzo M.C."/>
            <person name="Dwight S.S."/>
            <person name="Hitz B.C."/>
            <person name="Karra K."/>
            <person name="Nash R.S."/>
            <person name="Weng S."/>
            <person name="Wong E.D."/>
            <person name="Lloyd P."/>
            <person name="Skrzypek M.S."/>
            <person name="Miyasato S.R."/>
            <person name="Simison M."/>
            <person name="Cherry J.M."/>
        </authorList>
    </citation>
    <scope>GENOME REANNOTATION</scope>
    <source>
        <strain>ATCC 204508 / S288c</strain>
    </source>
</reference>
<reference key="4">
    <citation type="journal article" date="2007" name="Genome Res.">
        <title>Approaching a complete repository of sequence-verified protein-encoding clones for Saccharomyces cerevisiae.</title>
        <authorList>
            <person name="Hu Y."/>
            <person name="Rolfs A."/>
            <person name="Bhullar B."/>
            <person name="Murthy T.V.S."/>
            <person name="Zhu C."/>
            <person name="Berger M.F."/>
            <person name="Camargo A.A."/>
            <person name="Kelley F."/>
            <person name="McCarron S."/>
            <person name="Jepson D."/>
            <person name="Richardson A."/>
            <person name="Raphael J."/>
            <person name="Moreira D."/>
            <person name="Taycher E."/>
            <person name="Zuo D."/>
            <person name="Mohr S."/>
            <person name="Kane M.F."/>
            <person name="Williamson J."/>
            <person name="Simpson A.J.G."/>
            <person name="Bulyk M.L."/>
            <person name="Harlow E."/>
            <person name="Marsischky G."/>
            <person name="Kolodner R.D."/>
            <person name="LaBaer J."/>
        </authorList>
    </citation>
    <scope>NUCLEOTIDE SEQUENCE [GENOMIC DNA]</scope>
    <source>
        <strain>ATCC 204508 / S288c</strain>
    </source>
</reference>
<reference key="5">
    <citation type="journal article" date="1999" name="Biochemistry">
        <title>Expression, purification, characterization, and reconstitution of the large and small subunits of yeast acetohydroxyacid synthase.</title>
        <authorList>
            <person name="Pang S.S."/>
            <person name="Duggleby R.G."/>
        </authorList>
    </citation>
    <scope>FUNCTION</scope>
    <scope>CATALYTIC ACTIVITY</scope>
    <scope>BIOPHYSICOCHEMICAL PROPERTIES</scope>
    <scope>ACTIVITY REGULATION</scope>
    <scope>PATHWAY</scope>
    <scope>SUBCELLULAR LOCATION</scope>
</reference>
<reference key="6">
    <citation type="journal article" date="2003" name="Nature">
        <title>Global analysis of protein expression in yeast.</title>
        <authorList>
            <person name="Ghaemmaghami S."/>
            <person name="Huh W.-K."/>
            <person name="Bower K."/>
            <person name="Howson R.W."/>
            <person name="Belle A."/>
            <person name="Dephoure N."/>
            <person name="O'Shea E.K."/>
            <person name="Weissman J.S."/>
        </authorList>
    </citation>
    <scope>LEVEL OF PROTEIN EXPRESSION [LARGE SCALE ANALYSIS]</scope>
</reference>
<reference key="7">
    <citation type="journal article" date="2002" name="J. Mol. Biol.">
        <title>Crystal structure of yeast acetohydroxyacid synthase: a target for herbicidal inhibitors.</title>
        <authorList>
            <person name="Pang S.S."/>
            <person name="Duggleby R.G."/>
            <person name="Guddat L.W."/>
        </authorList>
    </citation>
    <scope>X-RAY CRYSTALLOGRAPHY (2.6 ANGSTROMS) OF 58-687</scope>
</reference>
<reference key="8">
    <citation type="journal article" date="2003" name="J. Biol. Chem.">
        <title>Molecular basis of sulfonylurea herbicide inhibition of acetohydroxyacid synthase.</title>
        <authorList>
            <person name="Pang S.S."/>
            <person name="Guddat L.W."/>
            <person name="Duggleby R.G."/>
        </authorList>
    </citation>
    <scope>X-RAY CRYSTALLOGRAPHY (2.8 ANGSTROMS) OF 60-687 IN COMPLEX WITH FAD; HERBICIDE AND THIAMINE DIPHOSPHATE</scope>
</reference>
<protein>
    <recommendedName>
        <fullName evidence="8">Acetolactate synthase catalytic subunit, mitochondrial</fullName>
        <ecNumber evidence="4">2.2.1.6</ecNumber>
    </recommendedName>
    <alternativeName>
        <fullName evidence="7">Acetohydroxy-acid synthase catalytic subunit</fullName>
        <shortName>AHAS</shortName>
        <shortName>ALS</shortName>
    </alternativeName>
</protein>
<dbReference type="EC" id="2.2.1.6" evidence="4"/>
<dbReference type="EMBL" id="X02549">
    <property type="protein sequence ID" value="CAA26400.1"/>
    <property type="molecule type" value="Genomic_DNA"/>
</dbReference>
<dbReference type="EMBL" id="Z49702">
    <property type="protein sequence ID" value="CAA89744.1"/>
    <property type="molecule type" value="Genomic_DNA"/>
</dbReference>
<dbReference type="EMBL" id="AY692995">
    <property type="protein sequence ID" value="AAT93014.1"/>
    <property type="molecule type" value="Genomic_DNA"/>
</dbReference>
<dbReference type="EMBL" id="BK006946">
    <property type="protein sequence ID" value="DAA10005.1"/>
    <property type="molecule type" value="Genomic_DNA"/>
</dbReference>
<dbReference type="PIR" id="A23808">
    <property type="entry name" value="YCBYI"/>
</dbReference>
<dbReference type="RefSeq" id="NP_013826.1">
    <property type="nucleotide sequence ID" value="NM_001182608.1"/>
</dbReference>
<dbReference type="PDB" id="1JSC">
    <property type="method" value="X-ray"/>
    <property type="resolution" value="2.60 A"/>
    <property type="chains" value="A/B=58-687"/>
</dbReference>
<dbReference type="PDB" id="1N0H">
    <property type="method" value="X-ray"/>
    <property type="resolution" value="2.80 A"/>
    <property type="chains" value="A/B=58-687"/>
</dbReference>
<dbReference type="PDB" id="1T9A">
    <property type="method" value="X-ray"/>
    <property type="resolution" value="2.59 A"/>
    <property type="chains" value="A/B=58-687"/>
</dbReference>
<dbReference type="PDB" id="1T9B">
    <property type="method" value="X-ray"/>
    <property type="resolution" value="2.20 A"/>
    <property type="chains" value="A/B=58-687"/>
</dbReference>
<dbReference type="PDB" id="1T9C">
    <property type="method" value="X-ray"/>
    <property type="resolution" value="2.34 A"/>
    <property type="chains" value="A/B=58-687"/>
</dbReference>
<dbReference type="PDB" id="1T9D">
    <property type="method" value="X-ray"/>
    <property type="resolution" value="2.30 A"/>
    <property type="chains" value="A/B/C/D=58-687"/>
</dbReference>
<dbReference type="PDB" id="5FEM">
    <property type="method" value="X-ray"/>
    <property type="resolution" value="2.17 A"/>
    <property type="chains" value="A/B=58-687"/>
</dbReference>
<dbReference type="PDB" id="5IMS">
    <property type="method" value="X-ray"/>
    <property type="resolution" value="1.98 A"/>
    <property type="chains" value="A/B=58-687"/>
</dbReference>
<dbReference type="PDB" id="5WKC">
    <property type="method" value="X-ray"/>
    <property type="resolution" value="2.33 A"/>
    <property type="chains" value="A/B/D/E=58-687"/>
</dbReference>
<dbReference type="PDB" id="6BD3">
    <property type="method" value="X-ray"/>
    <property type="resolution" value="2.28 A"/>
    <property type="chains" value="A/B=58-687"/>
</dbReference>
<dbReference type="PDB" id="6BD9">
    <property type="method" value="X-ray"/>
    <property type="resolution" value="1.98 A"/>
    <property type="chains" value="A/B=58-687"/>
</dbReference>
<dbReference type="PDB" id="6U9D">
    <property type="method" value="X-ray"/>
    <property type="resolution" value="3.19 A"/>
    <property type="chains" value="A/B/E/F/I/J/M/N/Q/R/U/V=58-687"/>
</dbReference>
<dbReference type="PDBsum" id="1JSC"/>
<dbReference type="PDBsum" id="1N0H"/>
<dbReference type="PDBsum" id="1T9A"/>
<dbReference type="PDBsum" id="1T9B"/>
<dbReference type="PDBsum" id="1T9C"/>
<dbReference type="PDBsum" id="1T9D"/>
<dbReference type="PDBsum" id="5FEM"/>
<dbReference type="PDBsum" id="5IMS"/>
<dbReference type="PDBsum" id="5WKC"/>
<dbReference type="PDBsum" id="6BD3"/>
<dbReference type="PDBsum" id="6BD9"/>
<dbReference type="PDBsum" id="6U9D"/>
<dbReference type="SMR" id="P07342"/>
<dbReference type="BioGRID" id="35284">
    <property type="interactions" value="140"/>
</dbReference>
<dbReference type="ComplexPortal" id="CPX-3034">
    <property type="entry name" value="Acetolactate synthase complex"/>
</dbReference>
<dbReference type="DIP" id="DIP-1104N"/>
<dbReference type="FunCoup" id="P07342">
    <property type="interactions" value="774"/>
</dbReference>
<dbReference type="IntAct" id="P07342">
    <property type="interactions" value="124"/>
</dbReference>
<dbReference type="MINT" id="P07342"/>
<dbReference type="STRING" id="4932.YMR108W"/>
<dbReference type="BindingDB" id="P07342"/>
<dbReference type="ChEMBL" id="CHEMBL1075095"/>
<dbReference type="CarbonylDB" id="P07342"/>
<dbReference type="iPTMnet" id="P07342"/>
<dbReference type="PaxDb" id="4932-YMR108W"/>
<dbReference type="PeptideAtlas" id="P07342"/>
<dbReference type="EnsemblFungi" id="YMR108W_mRNA">
    <property type="protein sequence ID" value="YMR108W"/>
    <property type="gene ID" value="YMR108W"/>
</dbReference>
<dbReference type="GeneID" id="855135"/>
<dbReference type="KEGG" id="sce:YMR108W"/>
<dbReference type="AGR" id="SGD:S000004714"/>
<dbReference type="SGD" id="S000004714">
    <property type="gene designation" value="ILV2"/>
</dbReference>
<dbReference type="VEuPathDB" id="FungiDB:YMR108W"/>
<dbReference type="eggNOG" id="KOG4166">
    <property type="taxonomic scope" value="Eukaryota"/>
</dbReference>
<dbReference type="HOGENOM" id="CLU_013748_1_2_1"/>
<dbReference type="InParanoid" id="P07342"/>
<dbReference type="OMA" id="QETDMIG"/>
<dbReference type="OrthoDB" id="16262at2759"/>
<dbReference type="BioCyc" id="YEAST:MONOMER3O-29"/>
<dbReference type="BRENDA" id="2.2.1.6">
    <property type="organism ID" value="984"/>
</dbReference>
<dbReference type="UniPathway" id="UPA00047">
    <property type="reaction ID" value="UER00055"/>
</dbReference>
<dbReference type="UniPathway" id="UPA00049">
    <property type="reaction ID" value="UER00059"/>
</dbReference>
<dbReference type="BioGRID-ORCS" id="855135">
    <property type="hits" value="0 hits in 10 CRISPR screens"/>
</dbReference>
<dbReference type="CD-CODE" id="E03F929F">
    <property type="entry name" value="Stress granule"/>
</dbReference>
<dbReference type="EvolutionaryTrace" id="P07342"/>
<dbReference type="PRO" id="PR:P07342"/>
<dbReference type="Proteomes" id="UP000002311">
    <property type="component" value="Chromosome XIII"/>
</dbReference>
<dbReference type="RNAct" id="P07342">
    <property type="molecule type" value="protein"/>
</dbReference>
<dbReference type="GO" id="GO:0005948">
    <property type="term" value="C:acetolactate synthase complex"/>
    <property type="evidence" value="ECO:0000314"/>
    <property type="project" value="SGD"/>
</dbReference>
<dbReference type="GO" id="GO:0005739">
    <property type="term" value="C:mitochondrion"/>
    <property type="evidence" value="ECO:0007005"/>
    <property type="project" value="SGD"/>
</dbReference>
<dbReference type="GO" id="GO:0003984">
    <property type="term" value="F:acetolactate synthase activity"/>
    <property type="evidence" value="ECO:0000314"/>
    <property type="project" value="SGD"/>
</dbReference>
<dbReference type="GO" id="GO:0050660">
    <property type="term" value="F:flavin adenine dinucleotide binding"/>
    <property type="evidence" value="ECO:0000314"/>
    <property type="project" value="SGD"/>
</dbReference>
<dbReference type="GO" id="GO:0000287">
    <property type="term" value="F:magnesium ion binding"/>
    <property type="evidence" value="ECO:0007669"/>
    <property type="project" value="InterPro"/>
</dbReference>
<dbReference type="GO" id="GO:0030976">
    <property type="term" value="F:thiamine pyrophosphate binding"/>
    <property type="evidence" value="ECO:0007669"/>
    <property type="project" value="InterPro"/>
</dbReference>
<dbReference type="GO" id="GO:0009082">
    <property type="term" value="P:branched-chain amino acid biosynthetic process"/>
    <property type="evidence" value="ECO:0000314"/>
    <property type="project" value="ComplexPortal"/>
</dbReference>
<dbReference type="GO" id="GO:0009097">
    <property type="term" value="P:isoleucine biosynthetic process"/>
    <property type="evidence" value="ECO:0000318"/>
    <property type="project" value="GO_Central"/>
</dbReference>
<dbReference type="GO" id="GO:0009099">
    <property type="term" value="P:L-valine biosynthetic process"/>
    <property type="evidence" value="ECO:0000318"/>
    <property type="project" value="GO_Central"/>
</dbReference>
<dbReference type="CDD" id="cd02015">
    <property type="entry name" value="TPP_AHAS"/>
    <property type="match status" value="1"/>
</dbReference>
<dbReference type="CDD" id="cd07035">
    <property type="entry name" value="TPP_PYR_POX_like"/>
    <property type="match status" value="1"/>
</dbReference>
<dbReference type="DisProt" id="DP00398"/>
<dbReference type="FunFam" id="3.40.50.1220:FF:000008">
    <property type="entry name" value="Acetolactate synthase"/>
    <property type="match status" value="1"/>
</dbReference>
<dbReference type="FunFam" id="3.40.50.970:FF:000007">
    <property type="entry name" value="Acetolactate synthase"/>
    <property type="match status" value="1"/>
</dbReference>
<dbReference type="FunFam" id="3.40.50.970:FF:000053">
    <property type="entry name" value="Acetolactate synthase, mitochondrial"/>
    <property type="match status" value="1"/>
</dbReference>
<dbReference type="Gene3D" id="3.40.50.970">
    <property type="match status" value="2"/>
</dbReference>
<dbReference type="Gene3D" id="3.40.50.1220">
    <property type="entry name" value="TPP-binding domain"/>
    <property type="match status" value="1"/>
</dbReference>
<dbReference type="InterPro" id="IPR012846">
    <property type="entry name" value="Acetolactate_synth_lsu"/>
</dbReference>
<dbReference type="InterPro" id="IPR039368">
    <property type="entry name" value="AHAS_TPP"/>
</dbReference>
<dbReference type="InterPro" id="IPR029035">
    <property type="entry name" value="DHS-like_NAD/FAD-binding_dom"/>
</dbReference>
<dbReference type="InterPro" id="IPR029061">
    <property type="entry name" value="THDP-binding"/>
</dbReference>
<dbReference type="InterPro" id="IPR012000">
    <property type="entry name" value="Thiamin_PyroP_enz_cen_dom"/>
</dbReference>
<dbReference type="InterPro" id="IPR012001">
    <property type="entry name" value="Thiamin_PyroP_enz_TPP-bd_dom"/>
</dbReference>
<dbReference type="InterPro" id="IPR000399">
    <property type="entry name" value="TPP-bd_CS"/>
</dbReference>
<dbReference type="InterPro" id="IPR045229">
    <property type="entry name" value="TPP_enz"/>
</dbReference>
<dbReference type="InterPro" id="IPR011766">
    <property type="entry name" value="TPP_enzyme_TPP-bd"/>
</dbReference>
<dbReference type="NCBIfam" id="TIGR00118">
    <property type="entry name" value="acolac_lg"/>
    <property type="match status" value="1"/>
</dbReference>
<dbReference type="PANTHER" id="PTHR18968:SF13">
    <property type="entry name" value="ACETOLACTATE SYNTHASE CATALYTIC SUBUNIT, MITOCHONDRIAL"/>
    <property type="match status" value="1"/>
</dbReference>
<dbReference type="PANTHER" id="PTHR18968">
    <property type="entry name" value="THIAMINE PYROPHOSPHATE ENZYMES"/>
    <property type="match status" value="1"/>
</dbReference>
<dbReference type="Pfam" id="PF02775">
    <property type="entry name" value="TPP_enzyme_C"/>
    <property type="match status" value="1"/>
</dbReference>
<dbReference type="Pfam" id="PF00205">
    <property type="entry name" value="TPP_enzyme_M"/>
    <property type="match status" value="1"/>
</dbReference>
<dbReference type="Pfam" id="PF02776">
    <property type="entry name" value="TPP_enzyme_N"/>
    <property type="match status" value="1"/>
</dbReference>
<dbReference type="SUPFAM" id="SSF52467">
    <property type="entry name" value="DHS-like NAD/FAD-binding domain"/>
    <property type="match status" value="1"/>
</dbReference>
<dbReference type="SUPFAM" id="SSF52518">
    <property type="entry name" value="Thiamin diphosphate-binding fold (THDP-binding)"/>
    <property type="match status" value="2"/>
</dbReference>
<dbReference type="PROSITE" id="PS00187">
    <property type="entry name" value="TPP_ENZYMES"/>
    <property type="match status" value="1"/>
</dbReference>
<sequence length="687" mass="74937">MIRQSTLKNFAIKRCFQHIAYRNTPAMRSVALAQRFYSSSSRYYSASPLPASKRPEPAPSFNVDPLEQPAEPSKLAKKLRAEPDMDTSFVGLTGGQIFNEMMSRQNVDTVFGYPGGAILPVYDAIHNSDKFNFVLPKHEQGAGHMAEGYARASGKPGVVLVTSGPGATNVVTPMADAFADGIPMVVFTGQVPTSAIGTDAFQEADVVGISRSCTKWNVMVKSVEELPLRINEAFEIATSGRPGPVLVDLPKDVTAAILRNPIPTKTTLPSNALNQLTSRAQDEFVMQSINKAADLINLAKKPVLYVGAGILNHADGPRLLKELSDRAQIPVTTTLQGLGSFDQEDPKSLDMLGMHGCATANLAVQNADLIIAVGARFDDRVTGNISKFAPEARRAAAEGRGGIIHFEVSPKNINKVVQTQIAVEGDATTNLGKMMSKIFPVKERSEWFAQINKWKKEYPYAYMEETPGSKIKPQTVIKKLSKVANDTGRHVIVTTGVGQHQMWAAQHWTWRNPHTFITSGGLGTMGYGLPAAIGAQVAKPESLVIDIDGDASFNMTLTELSSAVQAGTPVKILILNNEEQGMVTQWQSLFYEHRYSHTHQLNPDFIKLAEAMGLKGLRVKKQEELDAKLKEFVSTKGPVLLEVEVDKKVPVLPMVAGGSGLDEFINFDPEVERQQTELRHKRTGGKH</sequence>
<gene>
    <name type="primary">ILV2</name>
    <name type="synonym">SMR1</name>
    <name type="ordered locus">YMR108W</name>
    <name type="ORF">YM9718.07</name>
</gene>